<keyword id="KW-1185">Reference proteome</keyword>
<keyword id="KW-0810">Translation regulation</keyword>
<accession>P0DSE4</accession>
<accession>A0A7H2C772</accession>
<gene>
    <name evidence="2" type="primary">argL</name>
    <name evidence="4" type="ordered locus">b4766</name>
</gene>
<name>ARGL_ECOLI</name>
<dbReference type="EMBL" id="U00096">
    <property type="protein sequence ID" value="QNV50519.1"/>
    <property type="molecule type" value="Genomic_DNA"/>
</dbReference>
<dbReference type="InParanoid" id="P0DSE4"/>
<dbReference type="BioCyc" id="EcoCyc:MONOMER0-4479"/>
<dbReference type="Proteomes" id="UP000000625">
    <property type="component" value="Chromosome"/>
</dbReference>
<dbReference type="GO" id="GO:0006417">
    <property type="term" value="P:regulation of translation"/>
    <property type="evidence" value="ECO:0007669"/>
    <property type="project" value="UniProtKB-KW"/>
</dbReference>
<dbReference type="InterPro" id="IPR055056">
    <property type="entry name" value="ArgL-like"/>
</dbReference>
<dbReference type="Pfam" id="PF22864">
    <property type="entry name" value="ArgL-like"/>
    <property type="match status" value="1"/>
</dbReference>
<evidence type="ECO:0000269" key="1">
    <source>
    </source>
</evidence>
<evidence type="ECO:0000303" key="2">
    <source>
    </source>
</evidence>
<evidence type="ECO:0000305" key="3"/>
<evidence type="ECO:0000312" key="4">
    <source>
        <dbReference type="EMBL" id="QNV50519.1"/>
    </source>
</evidence>
<sequence>MNNYTYKVNFNSISGVRHARIKCPIYTKNTF</sequence>
<protein>
    <recommendedName>
        <fullName evidence="3">Putative translational regulatory protein ArgL</fullName>
    </recommendedName>
</protein>
<comment type="function">
    <text evidence="1">May serve a regulatory role in expression of downstream gene argF; in an argL-argF-lacZ fusion mutation of the start codon to a stop codon in argL increases expression of beta-galactosidase.</text>
</comment>
<comment type="induction">
    <text evidence="1">Expressed in equally in both exponential and stationary phase in rich medium (at protein level).</text>
</comment>
<comment type="miscellaneous">
    <text evidence="1">This gene lies upstream of and overlaps argL on the same strand in another reading frame.</text>
</comment>
<reference key="1">
    <citation type="journal article" date="1997" name="Science">
        <title>The complete genome sequence of Escherichia coli K-12.</title>
        <authorList>
            <person name="Blattner F.R."/>
            <person name="Plunkett G. III"/>
            <person name="Bloch C.A."/>
            <person name="Perna N.T."/>
            <person name="Burland V."/>
            <person name="Riley M."/>
            <person name="Collado-Vides J."/>
            <person name="Glasner J.D."/>
            <person name="Rode C.K."/>
            <person name="Mayhew G.F."/>
            <person name="Gregor J."/>
            <person name="Davis N.W."/>
            <person name="Kirkpatrick H.A."/>
            <person name="Goeden M.A."/>
            <person name="Rose D.J."/>
            <person name="Mau B."/>
            <person name="Shao Y."/>
        </authorList>
    </citation>
    <scope>NUCLEOTIDE SEQUENCE [LARGE SCALE GENOMIC DNA]</scope>
    <source>
        <strain>K12 / MG1655 / ATCC 47076</strain>
    </source>
</reference>
<reference key="2">
    <citation type="journal article" date="2019" name="MBio">
        <title>Identifying small proteins by ribosome profiling with stalled initiation complexes.</title>
        <authorList>
            <person name="Weaver J."/>
            <person name="Mohammad F."/>
            <person name="Buskirk A.R."/>
            <person name="Storz G."/>
        </authorList>
    </citation>
    <scope>POSSIBLE FUNCTION</scope>
    <scope>IDENTIFICATION</scope>
    <scope>INDUCTION</scope>
    <source>
        <strain>K12 / MG1655 / ATCC 47076</strain>
    </source>
</reference>
<feature type="chain" id="PRO_0000447136" description="Putative translational regulatory protein ArgL">
    <location>
        <begin position="1"/>
        <end position="31"/>
    </location>
</feature>
<proteinExistence type="evidence at protein level"/>
<organism>
    <name type="scientific">Escherichia coli (strain K12)</name>
    <dbReference type="NCBI Taxonomy" id="83333"/>
    <lineage>
        <taxon>Bacteria</taxon>
        <taxon>Pseudomonadati</taxon>
        <taxon>Pseudomonadota</taxon>
        <taxon>Gammaproteobacteria</taxon>
        <taxon>Enterobacterales</taxon>
        <taxon>Enterobacteriaceae</taxon>
        <taxon>Escherichia</taxon>
    </lineage>
</organism>